<feature type="chain" id="PRO_1000013861" description="Putative 4-hydroxy-4-methyl-2-oxoglutarate aldolase">
    <location>
        <begin position="1"/>
        <end position="162"/>
    </location>
</feature>
<feature type="binding site" evidence="1">
    <location>
        <begin position="75"/>
        <end position="78"/>
    </location>
    <ligand>
        <name>substrate</name>
    </ligand>
</feature>
<feature type="binding site" evidence="1">
    <location>
        <position position="97"/>
    </location>
    <ligand>
        <name>substrate</name>
    </ligand>
</feature>
<feature type="binding site" evidence="1">
    <location>
        <position position="98"/>
    </location>
    <ligand>
        <name>a divalent metal cation</name>
        <dbReference type="ChEBI" id="CHEBI:60240"/>
    </ligand>
</feature>
<proteinExistence type="inferred from homology"/>
<reference key="1">
    <citation type="submission" date="2007-04" db="EMBL/GenBank/DDBJ databases">
        <title>Complete sequence of Pseudomonas mendocina ymp.</title>
        <authorList>
            <consortium name="US DOE Joint Genome Institute"/>
            <person name="Copeland A."/>
            <person name="Lucas S."/>
            <person name="Lapidus A."/>
            <person name="Barry K."/>
            <person name="Glavina del Rio T."/>
            <person name="Dalin E."/>
            <person name="Tice H."/>
            <person name="Pitluck S."/>
            <person name="Kiss H."/>
            <person name="Brettin T."/>
            <person name="Detter J.C."/>
            <person name="Bruce D."/>
            <person name="Han C."/>
            <person name="Schmutz J."/>
            <person name="Larimer F."/>
            <person name="Land M."/>
            <person name="Hauser L."/>
            <person name="Kyrpides N."/>
            <person name="Mikhailova N."/>
            <person name="Hersman L."/>
            <person name="Dubois J."/>
            <person name="Maurice P."/>
            <person name="Richardson P."/>
        </authorList>
    </citation>
    <scope>NUCLEOTIDE SEQUENCE [LARGE SCALE GENOMIC DNA]</scope>
    <source>
        <strain>ymp</strain>
    </source>
</reference>
<sequence length="162" mass="17338">MHYITPDLCDAYPELVQVVEPMFANYGGRDSFGGQMVTIKCHEDNSLVKEQVDLPGEGRVLVVDGGGSLRRALLGDMLAEKAAKNGWAGIVVYGCIRDVDVIAQADLGVQALASHPMKTDKRGIGDLNVPVTFGGVTFKPGEYLYADNNGIIVSPQALSMPE</sequence>
<name>RRAAH_ECTM1</name>
<dbReference type="EC" id="4.1.3.17"/>
<dbReference type="EC" id="4.1.1.112"/>
<dbReference type="EMBL" id="CP000680">
    <property type="protein sequence ID" value="ABP84848.1"/>
    <property type="molecule type" value="Genomic_DNA"/>
</dbReference>
<dbReference type="SMR" id="A4XU32"/>
<dbReference type="STRING" id="399739.Pmen_2087"/>
<dbReference type="KEGG" id="pmy:Pmen_2087"/>
<dbReference type="PATRIC" id="fig|399739.8.peg.2117"/>
<dbReference type="eggNOG" id="COG0684">
    <property type="taxonomic scope" value="Bacteria"/>
</dbReference>
<dbReference type="HOGENOM" id="CLU_072626_4_0_6"/>
<dbReference type="OrthoDB" id="943692at2"/>
<dbReference type="GO" id="GO:0047443">
    <property type="term" value="F:4-hydroxy-4-methyl-2-oxoglutarate aldolase activity"/>
    <property type="evidence" value="ECO:0007669"/>
    <property type="project" value="UniProtKB-EC"/>
</dbReference>
<dbReference type="GO" id="GO:0046872">
    <property type="term" value="F:metal ion binding"/>
    <property type="evidence" value="ECO:0007669"/>
    <property type="project" value="UniProtKB-KW"/>
</dbReference>
<dbReference type="GO" id="GO:0008948">
    <property type="term" value="F:oxaloacetate decarboxylase activity"/>
    <property type="evidence" value="ECO:0007669"/>
    <property type="project" value="UniProtKB-EC"/>
</dbReference>
<dbReference type="GO" id="GO:0008428">
    <property type="term" value="F:ribonuclease inhibitor activity"/>
    <property type="evidence" value="ECO:0007669"/>
    <property type="project" value="InterPro"/>
</dbReference>
<dbReference type="GO" id="GO:0051252">
    <property type="term" value="P:regulation of RNA metabolic process"/>
    <property type="evidence" value="ECO:0007669"/>
    <property type="project" value="InterPro"/>
</dbReference>
<dbReference type="CDD" id="cd16841">
    <property type="entry name" value="RraA_family"/>
    <property type="match status" value="1"/>
</dbReference>
<dbReference type="Gene3D" id="3.50.30.40">
    <property type="entry name" value="Ribonuclease E inhibitor RraA/RraA-like"/>
    <property type="match status" value="1"/>
</dbReference>
<dbReference type="InterPro" id="IPR010203">
    <property type="entry name" value="RraA"/>
</dbReference>
<dbReference type="InterPro" id="IPR005493">
    <property type="entry name" value="RraA/RraA-like"/>
</dbReference>
<dbReference type="InterPro" id="IPR036704">
    <property type="entry name" value="RraA/RraA-like_sf"/>
</dbReference>
<dbReference type="NCBIfam" id="TIGR01935">
    <property type="entry name" value="NOT-MenG"/>
    <property type="match status" value="1"/>
</dbReference>
<dbReference type="NCBIfam" id="NF006875">
    <property type="entry name" value="PRK09372.1"/>
    <property type="match status" value="1"/>
</dbReference>
<dbReference type="NCBIfam" id="NF009134">
    <property type="entry name" value="PRK12487.1"/>
    <property type="match status" value="1"/>
</dbReference>
<dbReference type="PANTHER" id="PTHR33254">
    <property type="entry name" value="4-HYDROXY-4-METHYL-2-OXOGLUTARATE ALDOLASE 3-RELATED"/>
    <property type="match status" value="1"/>
</dbReference>
<dbReference type="PANTHER" id="PTHR33254:SF29">
    <property type="entry name" value="REGULATOR OF RIBONUCLEASE ACTIVITY A"/>
    <property type="match status" value="1"/>
</dbReference>
<dbReference type="Pfam" id="PF03737">
    <property type="entry name" value="RraA-like"/>
    <property type="match status" value="1"/>
</dbReference>
<dbReference type="SUPFAM" id="SSF89562">
    <property type="entry name" value="RraA-like"/>
    <property type="match status" value="1"/>
</dbReference>
<evidence type="ECO:0000250" key="1"/>
<evidence type="ECO:0000305" key="2"/>
<accession>A4XU32</accession>
<protein>
    <recommendedName>
        <fullName>Putative 4-hydroxy-4-methyl-2-oxoglutarate aldolase</fullName>
        <shortName>HMG aldolase</shortName>
        <ecNumber>4.1.3.17</ecNumber>
    </recommendedName>
    <alternativeName>
        <fullName>Oxaloacetate decarboxylase</fullName>
        <shortName>OAA decarboxylase</shortName>
        <ecNumber>4.1.1.112</ecNumber>
    </alternativeName>
    <alternativeName>
        <fullName>Regulator of ribonuclease activity homolog</fullName>
    </alternativeName>
    <alternativeName>
        <fullName>RraA-like protein</fullName>
    </alternativeName>
</protein>
<keyword id="KW-0456">Lyase</keyword>
<keyword id="KW-0479">Metal-binding</keyword>
<comment type="function">
    <text evidence="1">Catalyzes the aldol cleavage of 4-hydroxy-4-methyl-2-oxoglutarate (HMG) into 2 molecules of pyruvate. Also contains a secondary oxaloacetate (OAA) decarboxylase activity due to the common pyruvate enolate transition state formed following C-C bond cleavage in the retro-aldol and decarboxylation reactions (By similarity).</text>
</comment>
<comment type="catalytic activity">
    <reaction>
        <text>4-hydroxy-4-methyl-2-oxoglutarate = 2 pyruvate</text>
        <dbReference type="Rhea" id="RHEA:22748"/>
        <dbReference type="ChEBI" id="CHEBI:15361"/>
        <dbReference type="ChEBI" id="CHEBI:58276"/>
        <dbReference type="EC" id="4.1.3.17"/>
    </reaction>
</comment>
<comment type="catalytic activity">
    <reaction>
        <text>oxaloacetate + H(+) = pyruvate + CO2</text>
        <dbReference type="Rhea" id="RHEA:15641"/>
        <dbReference type="ChEBI" id="CHEBI:15361"/>
        <dbReference type="ChEBI" id="CHEBI:15378"/>
        <dbReference type="ChEBI" id="CHEBI:16452"/>
        <dbReference type="ChEBI" id="CHEBI:16526"/>
        <dbReference type="EC" id="4.1.1.112"/>
    </reaction>
</comment>
<comment type="cofactor">
    <cofactor evidence="1">
        <name>a divalent metal cation</name>
        <dbReference type="ChEBI" id="CHEBI:60240"/>
    </cofactor>
    <text evidence="1">Divalent metal cation.</text>
</comment>
<comment type="subunit">
    <text evidence="1">Homotrimer.</text>
</comment>
<comment type="similarity">
    <text evidence="2">Belongs to the class II aldolase/RraA-like family.</text>
</comment>
<organism>
    <name type="scientific">Ectopseudomonas mendocina (strain ymp)</name>
    <name type="common">Pseudomonas mendocina</name>
    <dbReference type="NCBI Taxonomy" id="399739"/>
    <lineage>
        <taxon>Bacteria</taxon>
        <taxon>Pseudomonadati</taxon>
        <taxon>Pseudomonadota</taxon>
        <taxon>Gammaproteobacteria</taxon>
        <taxon>Pseudomonadales</taxon>
        <taxon>Pseudomonadaceae</taxon>
        <taxon>Ectopseudomonas</taxon>
    </lineage>
</organism>
<gene>
    <name type="ordered locus">Pmen_2087</name>
</gene>